<keyword id="KW-1185">Reference proteome</keyword>
<reference key="1">
    <citation type="submission" date="1997-06" db="EMBL/GenBank/DDBJ databases">
        <authorList>
            <person name="Purnell B."/>
            <person name="Presecan E."/>
            <person name="Glaser P."/>
            <person name="Richou A."/>
            <person name="Danchin A."/>
            <person name="Goffeau A."/>
        </authorList>
    </citation>
    <scope>NUCLEOTIDE SEQUENCE [GENOMIC DNA]</scope>
    <source>
        <strain>168</strain>
    </source>
</reference>
<reference key="2">
    <citation type="journal article" date="1997" name="Nature">
        <title>The complete genome sequence of the Gram-positive bacterium Bacillus subtilis.</title>
        <authorList>
            <person name="Kunst F."/>
            <person name="Ogasawara N."/>
            <person name="Moszer I."/>
            <person name="Albertini A.M."/>
            <person name="Alloni G."/>
            <person name="Azevedo V."/>
            <person name="Bertero M.G."/>
            <person name="Bessieres P."/>
            <person name="Bolotin A."/>
            <person name="Borchert S."/>
            <person name="Borriss R."/>
            <person name="Boursier L."/>
            <person name="Brans A."/>
            <person name="Braun M."/>
            <person name="Brignell S.C."/>
            <person name="Bron S."/>
            <person name="Brouillet S."/>
            <person name="Bruschi C.V."/>
            <person name="Caldwell B."/>
            <person name="Capuano V."/>
            <person name="Carter N.M."/>
            <person name="Choi S.-K."/>
            <person name="Codani J.-J."/>
            <person name="Connerton I.F."/>
            <person name="Cummings N.J."/>
            <person name="Daniel R.A."/>
            <person name="Denizot F."/>
            <person name="Devine K.M."/>
            <person name="Duesterhoeft A."/>
            <person name="Ehrlich S.D."/>
            <person name="Emmerson P.T."/>
            <person name="Entian K.-D."/>
            <person name="Errington J."/>
            <person name="Fabret C."/>
            <person name="Ferrari E."/>
            <person name="Foulger D."/>
            <person name="Fritz C."/>
            <person name="Fujita M."/>
            <person name="Fujita Y."/>
            <person name="Fuma S."/>
            <person name="Galizzi A."/>
            <person name="Galleron N."/>
            <person name="Ghim S.-Y."/>
            <person name="Glaser P."/>
            <person name="Goffeau A."/>
            <person name="Golightly E.J."/>
            <person name="Grandi G."/>
            <person name="Guiseppi G."/>
            <person name="Guy B.J."/>
            <person name="Haga K."/>
            <person name="Haiech J."/>
            <person name="Harwood C.R."/>
            <person name="Henaut A."/>
            <person name="Hilbert H."/>
            <person name="Holsappel S."/>
            <person name="Hosono S."/>
            <person name="Hullo M.-F."/>
            <person name="Itaya M."/>
            <person name="Jones L.-M."/>
            <person name="Joris B."/>
            <person name="Karamata D."/>
            <person name="Kasahara Y."/>
            <person name="Klaerr-Blanchard M."/>
            <person name="Klein C."/>
            <person name="Kobayashi Y."/>
            <person name="Koetter P."/>
            <person name="Koningstein G."/>
            <person name="Krogh S."/>
            <person name="Kumano M."/>
            <person name="Kurita K."/>
            <person name="Lapidus A."/>
            <person name="Lardinois S."/>
            <person name="Lauber J."/>
            <person name="Lazarevic V."/>
            <person name="Lee S.-M."/>
            <person name="Levine A."/>
            <person name="Liu H."/>
            <person name="Masuda S."/>
            <person name="Mauel C."/>
            <person name="Medigue C."/>
            <person name="Medina N."/>
            <person name="Mellado R.P."/>
            <person name="Mizuno M."/>
            <person name="Moestl D."/>
            <person name="Nakai S."/>
            <person name="Noback M."/>
            <person name="Noone D."/>
            <person name="O'Reilly M."/>
            <person name="Ogawa K."/>
            <person name="Ogiwara A."/>
            <person name="Oudega B."/>
            <person name="Park S.-H."/>
            <person name="Parro V."/>
            <person name="Pohl T.M."/>
            <person name="Portetelle D."/>
            <person name="Porwollik S."/>
            <person name="Prescott A.M."/>
            <person name="Presecan E."/>
            <person name="Pujic P."/>
            <person name="Purnelle B."/>
            <person name="Rapoport G."/>
            <person name="Rey M."/>
            <person name="Reynolds S."/>
            <person name="Rieger M."/>
            <person name="Rivolta C."/>
            <person name="Rocha E."/>
            <person name="Roche B."/>
            <person name="Rose M."/>
            <person name="Sadaie Y."/>
            <person name="Sato T."/>
            <person name="Scanlan E."/>
            <person name="Schleich S."/>
            <person name="Schroeter R."/>
            <person name="Scoffone F."/>
            <person name="Sekiguchi J."/>
            <person name="Sekowska A."/>
            <person name="Seror S.J."/>
            <person name="Serror P."/>
            <person name="Shin B.-S."/>
            <person name="Soldo B."/>
            <person name="Sorokin A."/>
            <person name="Tacconi E."/>
            <person name="Takagi T."/>
            <person name="Takahashi H."/>
            <person name="Takemaru K."/>
            <person name="Takeuchi M."/>
            <person name="Tamakoshi A."/>
            <person name="Tanaka T."/>
            <person name="Terpstra P."/>
            <person name="Tognoni A."/>
            <person name="Tosato V."/>
            <person name="Uchiyama S."/>
            <person name="Vandenbol M."/>
            <person name="Vannier F."/>
            <person name="Vassarotti A."/>
            <person name="Viari A."/>
            <person name="Wambutt R."/>
            <person name="Wedler E."/>
            <person name="Wedler H."/>
            <person name="Weitzenegger T."/>
            <person name="Winters P."/>
            <person name="Wipat A."/>
            <person name="Yamamoto H."/>
            <person name="Yamane K."/>
            <person name="Yasumoto K."/>
            <person name="Yata K."/>
            <person name="Yoshida K."/>
            <person name="Yoshikawa H.-F."/>
            <person name="Zumstein E."/>
            <person name="Yoshikawa H."/>
            <person name="Danchin A."/>
        </authorList>
    </citation>
    <scope>NUCLEOTIDE SEQUENCE [LARGE SCALE GENOMIC DNA]</scope>
    <source>
        <strain>168</strain>
    </source>
</reference>
<reference key="3">
    <citation type="journal article" date="2006" name="Microbiology">
        <title>Functional analysis of 11 putative essential genes in Bacillus subtilis.</title>
        <authorList>
            <person name="Hunt A."/>
            <person name="Rawlins J.P."/>
            <person name="Thomaides H.B."/>
            <person name="Errington J."/>
        </authorList>
    </citation>
    <scope>CHARACTERIZATION</scope>
</reference>
<evidence type="ECO:0000305" key="1"/>
<name>YLAN_BACSU</name>
<accession>O07638</accession>
<accession>Q796J1</accession>
<dbReference type="EMBL" id="Z97025">
    <property type="protein sequence ID" value="CAB09719.1"/>
    <property type="molecule type" value="Genomic_DNA"/>
</dbReference>
<dbReference type="EMBL" id="AL009126">
    <property type="protein sequence ID" value="CAB13357.1"/>
    <property type="molecule type" value="Genomic_DNA"/>
</dbReference>
<dbReference type="PIR" id="D69873">
    <property type="entry name" value="D69873"/>
</dbReference>
<dbReference type="RefSeq" id="NP_389367.1">
    <property type="nucleotide sequence ID" value="NC_000964.3"/>
</dbReference>
<dbReference type="RefSeq" id="WP_003245286.1">
    <property type="nucleotide sequence ID" value="NZ_OZ025638.1"/>
</dbReference>
<dbReference type="SMR" id="O07638"/>
<dbReference type="FunCoup" id="O07638">
    <property type="interactions" value="2"/>
</dbReference>
<dbReference type="STRING" id="224308.BSU14840"/>
<dbReference type="PaxDb" id="224308-BSU14840"/>
<dbReference type="EnsemblBacteria" id="CAB13357">
    <property type="protein sequence ID" value="CAB13357"/>
    <property type="gene ID" value="BSU_14840"/>
</dbReference>
<dbReference type="GeneID" id="936566"/>
<dbReference type="KEGG" id="bsu:BSU14840"/>
<dbReference type="PATRIC" id="fig|224308.179.peg.1618"/>
<dbReference type="eggNOG" id="COG4838">
    <property type="taxonomic scope" value="Bacteria"/>
</dbReference>
<dbReference type="InParanoid" id="O07638"/>
<dbReference type="OrthoDB" id="2135235at2"/>
<dbReference type="PhylomeDB" id="O07638"/>
<dbReference type="BioCyc" id="BSUB:BSU14840-MONOMER"/>
<dbReference type="Proteomes" id="UP000001570">
    <property type="component" value="Chromosome"/>
</dbReference>
<dbReference type="Gene3D" id="1.10.287.750">
    <property type="entry name" value="SO2669-like"/>
    <property type="match status" value="1"/>
</dbReference>
<dbReference type="HAMAP" id="MF_01560">
    <property type="entry name" value="UPF0358"/>
    <property type="match status" value="1"/>
</dbReference>
<dbReference type="InterPro" id="IPR009983">
    <property type="entry name" value="UPF0358"/>
</dbReference>
<dbReference type="InterPro" id="IPR036270">
    <property type="entry name" value="UPF0358_sf"/>
</dbReference>
<dbReference type="NCBIfam" id="NF010187">
    <property type="entry name" value="PRK13666.1"/>
    <property type="match status" value="1"/>
</dbReference>
<dbReference type="Pfam" id="PF07408">
    <property type="entry name" value="DUF1507"/>
    <property type="match status" value="1"/>
</dbReference>
<dbReference type="SUPFAM" id="SSF140404">
    <property type="entry name" value="EF2458-like"/>
    <property type="match status" value="1"/>
</dbReference>
<organism>
    <name type="scientific">Bacillus subtilis (strain 168)</name>
    <dbReference type="NCBI Taxonomy" id="224308"/>
    <lineage>
        <taxon>Bacteria</taxon>
        <taxon>Bacillati</taxon>
        <taxon>Bacillota</taxon>
        <taxon>Bacilli</taxon>
        <taxon>Bacillales</taxon>
        <taxon>Bacillaceae</taxon>
        <taxon>Bacillus</taxon>
    </lineage>
</organism>
<protein>
    <recommendedName>
        <fullName>UPF0358 protein YlaN</fullName>
    </recommendedName>
</protein>
<gene>
    <name type="primary">ylaN</name>
    <name type="ordered locus">BSU14840</name>
</gene>
<comment type="function">
    <text>Essential for cell growth and for normal cell shape.</text>
</comment>
<comment type="similarity">
    <text evidence="1">Belongs to the UPF0358 family.</text>
</comment>
<proteinExistence type="evidence at protein level"/>
<sequence length="93" mass="10742">MASEMIVDHRQKAFELLKVDAEKILKLIRVQMDNLTMPQCPLYEEVLDTQMFGLSREIDFAVRLGLVDEKDGKDLLYTLERELSALHDAFTAK</sequence>
<feature type="chain" id="PRO_0000110642" description="UPF0358 protein YlaN">
    <location>
        <begin position="1"/>
        <end position="93"/>
    </location>
</feature>